<organism>
    <name type="scientific">Sulfurihydrogenibium sp. (strain YO3AOP1)</name>
    <dbReference type="NCBI Taxonomy" id="436114"/>
    <lineage>
        <taxon>Bacteria</taxon>
        <taxon>Pseudomonadati</taxon>
        <taxon>Aquificota</taxon>
        <taxon>Aquificia</taxon>
        <taxon>Aquificales</taxon>
        <taxon>Hydrogenothermaceae</taxon>
        <taxon>Sulfurihydrogenibium</taxon>
    </lineage>
</organism>
<proteinExistence type="inferred from homology"/>
<accession>B2V9T6</accession>
<comment type="function">
    <text evidence="1">Required for rescue of stalled ribosomes mediated by trans-translation. Binds to transfer-messenger RNA (tmRNA), required for stable association of tmRNA with ribosomes. tmRNA and SmpB together mimic tRNA shape, replacing the anticodon stem-loop with SmpB. tmRNA is encoded by the ssrA gene; the 2 termini fold to resemble tRNA(Ala) and it encodes a 'tag peptide', a short internal open reading frame. During trans-translation Ala-aminoacylated tmRNA acts like a tRNA, entering the A-site of stalled ribosomes, displacing the stalled mRNA. The ribosome then switches to translate the ORF on the tmRNA; the nascent peptide is terminated with the 'tag peptide' encoded by the tmRNA and targeted for degradation. The ribosome is freed to recommence translation, which seems to be the essential function of trans-translation.</text>
</comment>
<comment type="subcellular location">
    <subcellularLocation>
        <location evidence="1">Cytoplasm</location>
    </subcellularLocation>
    <text evidence="1">The tmRNA-SmpB complex associates with stalled 70S ribosomes.</text>
</comment>
<comment type="similarity">
    <text evidence="1">Belongs to the SmpB family.</text>
</comment>
<name>SSRP_SULSY</name>
<gene>
    <name evidence="1" type="primary">smpB</name>
    <name type="ordered locus">SYO3AOP1_1092</name>
</gene>
<protein>
    <recommendedName>
        <fullName evidence="1">SsrA-binding protein</fullName>
    </recommendedName>
    <alternativeName>
        <fullName evidence="1">Small protein B</fullName>
    </alternativeName>
</protein>
<reference key="1">
    <citation type="journal article" date="2009" name="J. Bacteriol.">
        <title>Complete and draft genome sequences of six members of the Aquificales.</title>
        <authorList>
            <person name="Reysenbach A.-L."/>
            <person name="Hamamura N."/>
            <person name="Podar M."/>
            <person name="Griffiths E."/>
            <person name="Ferreira S."/>
            <person name="Hochstein R."/>
            <person name="Heidelberg J."/>
            <person name="Johnson J."/>
            <person name="Mead D."/>
            <person name="Pohorille A."/>
            <person name="Sarmiento M."/>
            <person name="Schweighofer K."/>
            <person name="Seshadri R."/>
            <person name="Voytek M.A."/>
        </authorList>
    </citation>
    <scope>NUCLEOTIDE SEQUENCE [LARGE SCALE GENOMIC DNA]</scope>
    <source>
        <strain>YO3AOP1</strain>
    </source>
</reference>
<keyword id="KW-0963">Cytoplasm</keyword>
<keyword id="KW-0694">RNA-binding</keyword>
<sequence>MSEKVVATNKKAFHDYAILEKYEAGIVLTGSEVKSLREGACNLKDSFVMIEDGEAWLYNCYIAPYKPAAKFGHDPTRKRKLLLHKKEILKLMGKVKEKGLTIVPLRVYFKNGKAKVEIALAKGKVKYEKREAMKEKDMKREIEKSFKGKIKL</sequence>
<evidence type="ECO:0000255" key="1">
    <source>
        <dbReference type="HAMAP-Rule" id="MF_00023"/>
    </source>
</evidence>
<dbReference type="EMBL" id="CP001080">
    <property type="protein sequence ID" value="ACD66709.1"/>
    <property type="molecule type" value="Genomic_DNA"/>
</dbReference>
<dbReference type="RefSeq" id="WP_012459775.1">
    <property type="nucleotide sequence ID" value="NC_010730.1"/>
</dbReference>
<dbReference type="SMR" id="B2V9T6"/>
<dbReference type="STRING" id="436114.SYO3AOP1_1092"/>
<dbReference type="KEGG" id="sul:SYO3AOP1_1092"/>
<dbReference type="eggNOG" id="COG0691">
    <property type="taxonomic scope" value="Bacteria"/>
</dbReference>
<dbReference type="HOGENOM" id="CLU_108953_0_1_0"/>
<dbReference type="GO" id="GO:0005829">
    <property type="term" value="C:cytosol"/>
    <property type="evidence" value="ECO:0007669"/>
    <property type="project" value="TreeGrafter"/>
</dbReference>
<dbReference type="GO" id="GO:0003723">
    <property type="term" value="F:RNA binding"/>
    <property type="evidence" value="ECO:0007669"/>
    <property type="project" value="UniProtKB-UniRule"/>
</dbReference>
<dbReference type="GO" id="GO:0070929">
    <property type="term" value="P:trans-translation"/>
    <property type="evidence" value="ECO:0007669"/>
    <property type="project" value="UniProtKB-UniRule"/>
</dbReference>
<dbReference type="CDD" id="cd09294">
    <property type="entry name" value="SmpB"/>
    <property type="match status" value="1"/>
</dbReference>
<dbReference type="Gene3D" id="2.40.280.10">
    <property type="match status" value="1"/>
</dbReference>
<dbReference type="HAMAP" id="MF_00023">
    <property type="entry name" value="SmpB"/>
    <property type="match status" value="1"/>
</dbReference>
<dbReference type="InterPro" id="IPR023620">
    <property type="entry name" value="SmpB"/>
</dbReference>
<dbReference type="InterPro" id="IPR000037">
    <property type="entry name" value="SsrA-bd_prot"/>
</dbReference>
<dbReference type="InterPro" id="IPR020081">
    <property type="entry name" value="SsrA-bd_prot_CS"/>
</dbReference>
<dbReference type="NCBIfam" id="NF003843">
    <property type="entry name" value="PRK05422.1"/>
    <property type="match status" value="1"/>
</dbReference>
<dbReference type="NCBIfam" id="TIGR00086">
    <property type="entry name" value="smpB"/>
    <property type="match status" value="1"/>
</dbReference>
<dbReference type="PANTHER" id="PTHR30308:SF2">
    <property type="entry name" value="SSRA-BINDING PROTEIN"/>
    <property type="match status" value="1"/>
</dbReference>
<dbReference type="PANTHER" id="PTHR30308">
    <property type="entry name" value="TMRNA-BINDING COMPONENT OF TRANS-TRANSLATION TAGGING COMPLEX"/>
    <property type="match status" value="1"/>
</dbReference>
<dbReference type="Pfam" id="PF01668">
    <property type="entry name" value="SmpB"/>
    <property type="match status" value="1"/>
</dbReference>
<dbReference type="SUPFAM" id="SSF74982">
    <property type="entry name" value="Small protein B (SmpB)"/>
    <property type="match status" value="1"/>
</dbReference>
<dbReference type="PROSITE" id="PS01317">
    <property type="entry name" value="SSRP"/>
    <property type="match status" value="1"/>
</dbReference>
<feature type="chain" id="PRO_1000090195" description="SsrA-binding protein">
    <location>
        <begin position="1"/>
        <end position="152"/>
    </location>
</feature>